<reference key="1">
    <citation type="journal article" date="2011" name="J. Bacteriol.">
        <title>Comparative genomics of 28 Salmonella enterica isolates: evidence for CRISPR-mediated adaptive sublineage evolution.</title>
        <authorList>
            <person name="Fricke W.F."/>
            <person name="Mammel M.K."/>
            <person name="McDermott P.F."/>
            <person name="Tartera C."/>
            <person name="White D.G."/>
            <person name="Leclerc J.E."/>
            <person name="Ravel J."/>
            <person name="Cebula T.A."/>
        </authorList>
    </citation>
    <scope>NUCLEOTIDE SEQUENCE [LARGE SCALE GENOMIC DNA]</scope>
    <source>
        <strain>SL483</strain>
    </source>
</reference>
<proteinExistence type="inferred from homology"/>
<name>YHBP_SALA4</name>
<feature type="chain" id="PRO_1000198361" description="UPF0306 protein YhbP">
    <location>
        <begin position="1"/>
        <end position="147"/>
    </location>
</feature>
<comment type="similarity">
    <text evidence="1">Belongs to the UPF0306 family.</text>
</comment>
<protein>
    <recommendedName>
        <fullName evidence="1">UPF0306 protein YhbP</fullName>
    </recommendedName>
</protein>
<dbReference type="EMBL" id="CP001138">
    <property type="protein sequence ID" value="ACH50686.1"/>
    <property type="molecule type" value="Genomic_DNA"/>
</dbReference>
<dbReference type="RefSeq" id="WP_000380404.1">
    <property type="nucleotide sequence ID" value="NC_011149.1"/>
</dbReference>
<dbReference type="SMR" id="B5F6S3"/>
<dbReference type="KEGG" id="sea:SeAg_B3458"/>
<dbReference type="HOGENOM" id="CLU_105087_3_0_6"/>
<dbReference type="Proteomes" id="UP000008819">
    <property type="component" value="Chromosome"/>
</dbReference>
<dbReference type="Gene3D" id="2.30.110.10">
    <property type="entry name" value="Electron Transport, Fmn-binding Protein, Chain A"/>
    <property type="match status" value="1"/>
</dbReference>
<dbReference type="HAMAP" id="MF_00764">
    <property type="entry name" value="UPF0306"/>
    <property type="match status" value="1"/>
</dbReference>
<dbReference type="InterPro" id="IPR012349">
    <property type="entry name" value="Split_barrel_FMN-bd"/>
</dbReference>
<dbReference type="InterPro" id="IPR011194">
    <property type="entry name" value="UPF0306"/>
</dbReference>
<dbReference type="NCBIfam" id="NF002900">
    <property type="entry name" value="PRK03467.1"/>
    <property type="match status" value="1"/>
</dbReference>
<dbReference type="PIRSF" id="PIRSF009554">
    <property type="entry name" value="UCP009554"/>
    <property type="match status" value="1"/>
</dbReference>
<dbReference type="SUPFAM" id="SSF50475">
    <property type="entry name" value="FMN-binding split barrel"/>
    <property type="match status" value="1"/>
</dbReference>
<evidence type="ECO:0000255" key="1">
    <source>
        <dbReference type="HAMAP-Rule" id="MF_00764"/>
    </source>
</evidence>
<accession>B5F6S3</accession>
<gene>
    <name evidence="1" type="primary">yhbP</name>
    <name type="ordered locus">SeAg_B3458</name>
</gene>
<sequence length="147" mass="16688">MDTLTAIGRWLAKQHVVTWCVHHEGELWCANAFYLFDAQNVALYLLTDDKTRHAQMSGACAPVAGTVNGQPKTVARIRGVQFKGEIRRLEGQESDAARKAYLRRFPVARVLPAPVWEIRLDEIKFTDNTLGFGKKLHWLRDSRAQQA</sequence>
<organism>
    <name type="scientific">Salmonella agona (strain SL483)</name>
    <dbReference type="NCBI Taxonomy" id="454166"/>
    <lineage>
        <taxon>Bacteria</taxon>
        <taxon>Pseudomonadati</taxon>
        <taxon>Pseudomonadota</taxon>
        <taxon>Gammaproteobacteria</taxon>
        <taxon>Enterobacterales</taxon>
        <taxon>Enterobacteriaceae</taxon>
        <taxon>Salmonella</taxon>
    </lineage>
</organism>